<gene>
    <name evidence="1" type="primary">lpxC</name>
    <name type="ordered locus">c0114</name>
</gene>
<organism>
    <name type="scientific">Escherichia coli O6:H1 (strain CFT073 / ATCC 700928 / UPEC)</name>
    <dbReference type="NCBI Taxonomy" id="199310"/>
    <lineage>
        <taxon>Bacteria</taxon>
        <taxon>Pseudomonadati</taxon>
        <taxon>Pseudomonadota</taxon>
        <taxon>Gammaproteobacteria</taxon>
        <taxon>Enterobacterales</taxon>
        <taxon>Enterobacteriaceae</taxon>
        <taxon>Escherichia</taxon>
    </lineage>
</organism>
<protein>
    <recommendedName>
        <fullName evidence="1">UDP-3-O-acyl-N-acetylglucosamine deacetylase</fullName>
        <shortName evidence="1">UDP-3-O-acyl-GlcNAc deacetylase</shortName>
        <ecNumber evidence="1">3.5.1.108</ecNumber>
    </recommendedName>
    <alternativeName>
        <fullName evidence="1">UDP-3-O-[R-3-hydroxymyristoyl]-N-acetylglucosamine deacetylase</fullName>
    </alternativeName>
</protein>
<dbReference type="EC" id="3.5.1.108" evidence="1"/>
<dbReference type="EMBL" id="AE014075">
    <property type="protein sequence ID" value="AAN78612.1"/>
    <property type="molecule type" value="Genomic_DNA"/>
</dbReference>
<dbReference type="RefSeq" id="WP_000595482.1">
    <property type="nucleotide sequence ID" value="NZ_CP051263.1"/>
</dbReference>
<dbReference type="PDB" id="8V24">
    <property type="method" value="EM"/>
    <property type="resolution" value="3.60 A"/>
    <property type="chains" value="B/D=1-305"/>
</dbReference>
<dbReference type="PDBsum" id="8V24"/>
<dbReference type="EMDB" id="EMD-42897"/>
<dbReference type="SMR" id="P0A726"/>
<dbReference type="STRING" id="199310.c0114"/>
<dbReference type="GeneID" id="93777338"/>
<dbReference type="KEGG" id="ecc:c0114"/>
<dbReference type="eggNOG" id="COG0774">
    <property type="taxonomic scope" value="Bacteria"/>
</dbReference>
<dbReference type="HOGENOM" id="CLU_046528_1_0_6"/>
<dbReference type="BioCyc" id="ECOL199310:C0114-MONOMER"/>
<dbReference type="UniPathway" id="UPA00359">
    <property type="reaction ID" value="UER00478"/>
</dbReference>
<dbReference type="Proteomes" id="UP000001410">
    <property type="component" value="Chromosome"/>
</dbReference>
<dbReference type="GO" id="GO:0016020">
    <property type="term" value="C:membrane"/>
    <property type="evidence" value="ECO:0007669"/>
    <property type="project" value="GOC"/>
</dbReference>
<dbReference type="GO" id="GO:0046872">
    <property type="term" value="F:metal ion binding"/>
    <property type="evidence" value="ECO:0007669"/>
    <property type="project" value="UniProtKB-KW"/>
</dbReference>
<dbReference type="GO" id="GO:0103117">
    <property type="term" value="F:UDP-3-O-acyl-N-acetylglucosamine deacetylase activity"/>
    <property type="evidence" value="ECO:0007669"/>
    <property type="project" value="UniProtKB-UniRule"/>
</dbReference>
<dbReference type="GO" id="GO:0009245">
    <property type="term" value="P:lipid A biosynthetic process"/>
    <property type="evidence" value="ECO:0007669"/>
    <property type="project" value="UniProtKB-UniRule"/>
</dbReference>
<dbReference type="FunFam" id="3.30.1700.10:FF:000001">
    <property type="entry name" value="UDP-3-O-acyl-N-acetylglucosamine deacetylase"/>
    <property type="match status" value="1"/>
</dbReference>
<dbReference type="FunFam" id="3.30.230.20:FF:000001">
    <property type="entry name" value="UDP-3-O-acyl-N-acetylglucosamine deacetylase"/>
    <property type="match status" value="1"/>
</dbReference>
<dbReference type="Gene3D" id="3.30.230.20">
    <property type="entry name" value="lpxc deacetylase, domain 1"/>
    <property type="match status" value="1"/>
</dbReference>
<dbReference type="Gene3D" id="3.30.1700.10">
    <property type="entry name" value="lpxc deacetylase, domain 2"/>
    <property type="match status" value="1"/>
</dbReference>
<dbReference type="HAMAP" id="MF_00388">
    <property type="entry name" value="LpxC"/>
    <property type="match status" value="1"/>
</dbReference>
<dbReference type="InterPro" id="IPR020568">
    <property type="entry name" value="Ribosomal_Su5_D2-typ_SF"/>
</dbReference>
<dbReference type="InterPro" id="IPR004463">
    <property type="entry name" value="UDP-acyl_GlcNac_deAcase"/>
</dbReference>
<dbReference type="InterPro" id="IPR011334">
    <property type="entry name" value="UDP-acyl_GlcNac_deAcase_C"/>
</dbReference>
<dbReference type="InterPro" id="IPR015870">
    <property type="entry name" value="UDP-acyl_N-AcGlcN_deAcase_N"/>
</dbReference>
<dbReference type="NCBIfam" id="TIGR00325">
    <property type="entry name" value="lpxC"/>
    <property type="match status" value="1"/>
</dbReference>
<dbReference type="PANTHER" id="PTHR33694">
    <property type="entry name" value="UDP-3-O-ACYL-N-ACETYLGLUCOSAMINE DEACETYLASE 1, MITOCHONDRIAL-RELATED"/>
    <property type="match status" value="1"/>
</dbReference>
<dbReference type="PANTHER" id="PTHR33694:SF1">
    <property type="entry name" value="UDP-3-O-ACYL-N-ACETYLGLUCOSAMINE DEACETYLASE 1, MITOCHONDRIAL-RELATED"/>
    <property type="match status" value="1"/>
</dbReference>
<dbReference type="Pfam" id="PF03331">
    <property type="entry name" value="LpxC"/>
    <property type="match status" value="1"/>
</dbReference>
<dbReference type="SUPFAM" id="SSF54211">
    <property type="entry name" value="Ribosomal protein S5 domain 2-like"/>
    <property type="match status" value="2"/>
</dbReference>
<evidence type="ECO:0000255" key="1">
    <source>
        <dbReference type="HAMAP-Rule" id="MF_00388"/>
    </source>
</evidence>
<proteinExistence type="evidence at protein level"/>
<accession>P0A726</accession>
<accession>P07652</accession>
<sequence>MIKQRTLKRIVQATGVGLHTGKKVTLTLRPAPANTGVIYRRTDLNPPVDFPADAKSVRDTMLCTCLVNEHDVRISTVEHLNAALAGLGIDNIVIEVNAPEIPIMDGSAAPFVYLLLDAGIDELNCAKKFVRIKETVRVEDGDKWAEFKPYNGFSLDFTIDFNHPAIDSSNQRYAMNFSADAFMRQISRARTFGFMRDIEYLQSRGLCLGGSFDCAIVVDDYRVLNEDGLRFEDEFVRHKMLDAIGDLFMCGHNIIGAFTAYKSGHALNNKLLQAVLAKQEAWEYVTFQDDAELPLAFKAPSAVLA</sequence>
<comment type="function">
    <text evidence="1">Catalyzes the hydrolysis of UDP-3-O-myristoyl-N-acetylglucosamine to form UDP-3-O-myristoylglucosamine and acetate, the committed step in lipid A biosynthesis.</text>
</comment>
<comment type="catalytic activity">
    <reaction evidence="1">
        <text>a UDP-3-O-[(3R)-3-hydroxyacyl]-N-acetyl-alpha-D-glucosamine + H2O = a UDP-3-O-[(3R)-3-hydroxyacyl]-alpha-D-glucosamine + acetate</text>
        <dbReference type="Rhea" id="RHEA:67816"/>
        <dbReference type="ChEBI" id="CHEBI:15377"/>
        <dbReference type="ChEBI" id="CHEBI:30089"/>
        <dbReference type="ChEBI" id="CHEBI:137740"/>
        <dbReference type="ChEBI" id="CHEBI:173225"/>
        <dbReference type="EC" id="3.5.1.108"/>
    </reaction>
</comment>
<comment type="cofactor">
    <cofactor evidence="1">
        <name>Zn(2+)</name>
        <dbReference type="ChEBI" id="CHEBI:29105"/>
    </cofactor>
</comment>
<comment type="pathway">
    <text evidence="1">Glycolipid biosynthesis; lipid IV(A) biosynthesis; lipid IV(A) from (3R)-3-hydroxytetradecanoyl-[acyl-carrier-protein] and UDP-N-acetyl-alpha-D-glucosamine: step 2/6.</text>
</comment>
<comment type="similarity">
    <text evidence="1">Belongs to the LpxC family.</text>
</comment>
<keyword id="KW-0002">3D-structure</keyword>
<keyword id="KW-0378">Hydrolase</keyword>
<keyword id="KW-0441">Lipid A biosynthesis</keyword>
<keyword id="KW-0444">Lipid biosynthesis</keyword>
<keyword id="KW-0443">Lipid metabolism</keyword>
<keyword id="KW-0479">Metal-binding</keyword>
<keyword id="KW-1185">Reference proteome</keyword>
<keyword id="KW-0862">Zinc</keyword>
<name>LPXC_ECOL6</name>
<reference key="1">
    <citation type="journal article" date="2002" name="Proc. Natl. Acad. Sci. U.S.A.">
        <title>Extensive mosaic structure revealed by the complete genome sequence of uropathogenic Escherichia coli.</title>
        <authorList>
            <person name="Welch R.A."/>
            <person name="Burland V."/>
            <person name="Plunkett G. III"/>
            <person name="Redford P."/>
            <person name="Roesch P."/>
            <person name="Rasko D."/>
            <person name="Buckles E.L."/>
            <person name="Liou S.-R."/>
            <person name="Boutin A."/>
            <person name="Hackett J."/>
            <person name="Stroud D."/>
            <person name="Mayhew G.F."/>
            <person name="Rose D.J."/>
            <person name="Zhou S."/>
            <person name="Schwartz D.C."/>
            <person name="Perna N.T."/>
            <person name="Mobley H.L.T."/>
            <person name="Donnenberg M.S."/>
            <person name="Blattner F.R."/>
        </authorList>
    </citation>
    <scope>NUCLEOTIDE SEQUENCE [LARGE SCALE GENOMIC DNA]</scope>
    <source>
        <strain>CFT073 / ATCC 700928 / UPEC</strain>
    </source>
</reference>
<feature type="chain" id="PRO_0000191930" description="UDP-3-O-acyl-N-acetylglucosamine deacetylase">
    <location>
        <begin position="1"/>
        <end position="305"/>
    </location>
</feature>
<feature type="active site" description="Proton donor" evidence="1">
    <location>
        <position position="265"/>
    </location>
</feature>
<feature type="binding site" evidence="1">
    <location>
        <position position="79"/>
    </location>
    <ligand>
        <name>Zn(2+)</name>
        <dbReference type="ChEBI" id="CHEBI:29105"/>
    </ligand>
</feature>
<feature type="binding site" evidence="1">
    <location>
        <position position="238"/>
    </location>
    <ligand>
        <name>Zn(2+)</name>
        <dbReference type="ChEBI" id="CHEBI:29105"/>
    </ligand>
</feature>
<feature type="binding site" evidence="1">
    <location>
        <position position="242"/>
    </location>
    <ligand>
        <name>Zn(2+)</name>
        <dbReference type="ChEBI" id="CHEBI:29105"/>
    </ligand>
</feature>